<gene>
    <name evidence="1" type="primary">speA</name>
    <name type="ordered locus">Gura_0983</name>
</gene>
<name>SPEA_GEOUR</name>
<reference key="1">
    <citation type="submission" date="2007-05" db="EMBL/GenBank/DDBJ databases">
        <title>Complete sequence of Geobacter uraniireducens Rf4.</title>
        <authorList>
            <consortium name="US DOE Joint Genome Institute"/>
            <person name="Copeland A."/>
            <person name="Lucas S."/>
            <person name="Lapidus A."/>
            <person name="Barry K."/>
            <person name="Detter J.C."/>
            <person name="Glavina del Rio T."/>
            <person name="Hammon N."/>
            <person name="Israni S."/>
            <person name="Dalin E."/>
            <person name="Tice H."/>
            <person name="Pitluck S."/>
            <person name="Chertkov O."/>
            <person name="Brettin T."/>
            <person name="Bruce D."/>
            <person name="Han C."/>
            <person name="Schmutz J."/>
            <person name="Larimer F."/>
            <person name="Land M."/>
            <person name="Hauser L."/>
            <person name="Kyrpides N."/>
            <person name="Mikhailova N."/>
            <person name="Shelobolina E."/>
            <person name="Aklujkar M."/>
            <person name="Lovley D."/>
            <person name="Richardson P."/>
        </authorList>
    </citation>
    <scope>NUCLEOTIDE SEQUENCE [LARGE SCALE GENOMIC DNA]</scope>
    <source>
        <strain>ATCC BAA-1134 / JCM 13001 / Rf4</strain>
    </source>
</reference>
<sequence length="635" mass="71778">MERWSINDSAKIYNLNNWGADLFSINKKGNVCVHPSSNSKHSIDLRALVDDLIKRKIKPPILLRFMDVLQGRIASINRVFKNAIQENNYPAKYQTFYPIKVNQQRQVVEAIANFGKRYNIGLEVGSKPELVAGISFATGNNLPIICNGYKDTEYIEMVLSATKIGYDITLVVEKLFELEKIIELVKKTGVQPKLGIRVKLSSKGIGKWATSGGEDAKFGLRMSEIIAAIEMLEKHDLIKCVKLLHFHIGSQITKIDKIKTALIEGARIYAEMRKLGVGIEYLDIGGGLGVDYDGSKSSNFSSVNYSIEEYANDVIYQIKNICEDAGVECPNIISESGRATVAHYSVLVTNVLNTNTQNIMPDFEATLNEAEKLAPTVKKLEDIYKSIDRYSLREDYHDTLQLIQEAVSLFNLGYLTLNDRAMAEWLYGKIIRKINSIVEKIKPIPEELQNFQLSLRQTYFANFSLFQSVPDSWAIDQLFPIVPIQRLNQKPDVIASIADITCDSDGEITSFVGENGRTKFLPLHKIRKDEAYYIGFFLIGAYQEILGDMHNLFGDTNAVHITFNKKTGYIIDTVINGDATWESLKYVQYKGPEILKRVRDNLEKDVALRKISIEESSHFLELLDRTLLGYTYLGE</sequence>
<evidence type="ECO:0000255" key="1">
    <source>
        <dbReference type="HAMAP-Rule" id="MF_01417"/>
    </source>
</evidence>
<feature type="chain" id="PRO_1000087404" description="Biosynthetic arginine decarboxylase">
    <location>
        <begin position="1"/>
        <end position="635"/>
    </location>
</feature>
<feature type="binding site" evidence="1">
    <location>
        <begin position="282"/>
        <end position="292"/>
    </location>
    <ligand>
        <name>substrate</name>
    </ligand>
</feature>
<feature type="modified residue" description="N6-(pyridoxal phosphate)lysine" evidence="1">
    <location>
        <position position="100"/>
    </location>
</feature>
<keyword id="KW-0210">Decarboxylase</keyword>
<keyword id="KW-0456">Lyase</keyword>
<keyword id="KW-0460">Magnesium</keyword>
<keyword id="KW-0479">Metal-binding</keyword>
<keyword id="KW-0620">Polyamine biosynthesis</keyword>
<keyword id="KW-0663">Pyridoxal phosphate</keyword>
<keyword id="KW-1185">Reference proteome</keyword>
<keyword id="KW-0745">Spermidine biosynthesis</keyword>
<comment type="function">
    <text evidence="1">Catalyzes the biosynthesis of agmatine from arginine.</text>
</comment>
<comment type="catalytic activity">
    <reaction evidence="1">
        <text>L-arginine + H(+) = agmatine + CO2</text>
        <dbReference type="Rhea" id="RHEA:17641"/>
        <dbReference type="ChEBI" id="CHEBI:15378"/>
        <dbReference type="ChEBI" id="CHEBI:16526"/>
        <dbReference type="ChEBI" id="CHEBI:32682"/>
        <dbReference type="ChEBI" id="CHEBI:58145"/>
        <dbReference type="EC" id="4.1.1.19"/>
    </reaction>
</comment>
<comment type="cofactor">
    <cofactor evidence="1">
        <name>Mg(2+)</name>
        <dbReference type="ChEBI" id="CHEBI:18420"/>
    </cofactor>
</comment>
<comment type="cofactor">
    <cofactor evidence="1">
        <name>pyridoxal 5'-phosphate</name>
        <dbReference type="ChEBI" id="CHEBI:597326"/>
    </cofactor>
</comment>
<comment type="pathway">
    <text evidence="1">Amine and polyamine biosynthesis; agmatine biosynthesis; agmatine from L-arginine: step 1/1.</text>
</comment>
<comment type="similarity">
    <text evidence="1">Belongs to the Orn/Lys/Arg decarboxylase class-II family. SpeA subfamily.</text>
</comment>
<accession>A5GB52</accession>
<dbReference type="EC" id="4.1.1.19" evidence="1"/>
<dbReference type="EMBL" id="CP000698">
    <property type="protein sequence ID" value="ABQ25189.1"/>
    <property type="molecule type" value="Genomic_DNA"/>
</dbReference>
<dbReference type="RefSeq" id="WP_011937913.1">
    <property type="nucleotide sequence ID" value="NC_009483.1"/>
</dbReference>
<dbReference type="SMR" id="A5GB52"/>
<dbReference type="STRING" id="351605.Gura_0983"/>
<dbReference type="KEGG" id="gur:Gura_0983"/>
<dbReference type="HOGENOM" id="CLU_027243_1_0_7"/>
<dbReference type="OrthoDB" id="9802658at2"/>
<dbReference type="UniPathway" id="UPA00186">
    <property type="reaction ID" value="UER00284"/>
</dbReference>
<dbReference type="Proteomes" id="UP000006695">
    <property type="component" value="Chromosome"/>
</dbReference>
<dbReference type="GO" id="GO:0008792">
    <property type="term" value="F:arginine decarboxylase activity"/>
    <property type="evidence" value="ECO:0007669"/>
    <property type="project" value="UniProtKB-UniRule"/>
</dbReference>
<dbReference type="GO" id="GO:0046872">
    <property type="term" value="F:metal ion binding"/>
    <property type="evidence" value="ECO:0007669"/>
    <property type="project" value="UniProtKB-KW"/>
</dbReference>
<dbReference type="GO" id="GO:0006527">
    <property type="term" value="P:arginine catabolic process"/>
    <property type="evidence" value="ECO:0007669"/>
    <property type="project" value="InterPro"/>
</dbReference>
<dbReference type="GO" id="GO:0033388">
    <property type="term" value="P:putrescine biosynthetic process from arginine"/>
    <property type="evidence" value="ECO:0007669"/>
    <property type="project" value="TreeGrafter"/>
</dbReference>
<dbReference type="GO" id="GO:0008295">
    <property type="term" value="P:spermidine biosynthetic process"/>
    <property type="evidence" value="ECO:0007669"/>
    <property type="project" value="UniProtKB-UniRule"/>
</dbReference>
<dbReference type="CDD" id="cd06830">
    <property type="entry name" value="PLPDE_III_ADC"/>
    <property type="match status" value="1"/>
</dbReference>
<dbReference type="FunFam" id="1.20.58.930:FF:000002">
    <property type="entry name" value="Biosynthetic arginine decarboxylase"/>
    <property type="match status" value="1"/>
</dbReference>
<dbReference type="Gene3D" id="1.10.287.3440">
    <property type="match status" value="1"/>
</dbReference>
<dbReference type="Gene3D" id="1.20.58.930">
    <property type="match status" value="1"/>
</dbReference>
<dbReference type="Gene3D" id="3.20.20.10">
    <property type="entry name" value="Alanine racemase"/>
    <property type="match status" value="1"/>
</dbReference>
<dbReference type="Gene3D" id="2.40.37.10">
    <property type="entry name" value="Lyase, Ornithine Decarboxylase, Chain A, domain 1"/>
    <property type="match status" value="1"/>
</dbReference>
<dbReference type="HAMAP" id="MF_01417">
    <property type="entry name" value="SpeA"/>
    <property type="match status" value="1"/>
</dbReference>
<dbReference type="InterPro" id="IPR009006">
    <property type="entry name" value="Ala_racemase/Decarboxylase_C"/>
</dbReference>
<dbReference type="InterPro" id="IPR040634">
    <property type="entry name" value="Arg_decarb_HB"/>
</dbReference>
<dbReference type="InterPro" id="IPR041128">
    <property type="entry name" value="Arg_decarbox_C"/>
</dbReference>
<dbReference type="InterPro" id="IPR002985">
    <property type="entry name" value="Arg_decrbxlase"/>
</dbReference>
<dbReference type="InterPro" id="IPR022657">
    <property type="entry name" value="De-COase2_CS"/>
</dbReference>
<dbReference type="InterPro" id="IPR022644">
    <property type="entry name" value="De-COase2_N"/>
</dbReference>
<dbReference type="InterPro" id="IPR022653">
    <property type="entry name" value="De-COase2_pyr-phos_BS"/>
</dbReference>
<dbReference type="InterPro" id="IPR000183">
    <property type="entry name" value="Orn/DAP/Arg_de-COase"/>
</dbReference>
<dbReference type="InterPro" id="IPR029066">
    <property type="entry name" value="PLP-binding_barrel"/>
</dbReference>
<dbReference type="NCBIfam" id="NF003763">
    <property type="entry name" value="PRK05354.1"/>
    <property type="match status" value="1"/>
</dbReference>
<dbReference type="NCBIfam" id="TIGR01273">
    <property type="entry name" value="speA"/>
    <property type="match status" value="1"/>
</dbReference>
<dbReference type="PANTHER" id="PTHR43295">
    <property type="entry name" value="ARGININE DECARBOXYLASE"/>
    <property type="match status" value="1"/>
</dbReference>
<dbReference type="PANTHER" id="PTHR43295:SF9">
    <property type="entry name" value="BIOSYNTHETIC ARGININE DECARBOXYLASE"/>
    <property type="match status" value="1"/>
</dbReference>
<dbReference type="Pfam" id="PF17810">
    <property type="entry name" value="Arg_decarb_HB"/>
    <property type="match status" value="1"/>
</dbReference>
<dbReference type="Pfam" id="PF17944">
    <property type="entry name" value="Arg_decarbox_C"/>
    <property type="match status" value="1"/>
</dbReference>
<dbReference type="Pfam" id="PF02784">
    <property type="entry name" value="Orn_Arg_deC_N"/>
    <property type="match status" value="1"/>
</dbReference>
<dbReference type="PIRSF" id="PIRSF001336">
    <property type="entry name" value="Arg_decrbxlase"/>
    <property type="match status" value="1"/>
</dbReference>
<dbReference type="PRINTS" id="PR01180">
    <property type="entry name" value="ARGDCRBXLASE"/>
</dbReference>
<dbReference type="PRINTS" id="PR01179">
    <property type="entry name" value="ODADCRBXLASE"/>
</dbReference>
<dbReference type="SUPFAM" id="SSF50621">
    <property type="entry name" value="Alanine racemase C-terminal domain-like"/>
    <property type="match status" value="1"/>
</dbReference>
<dbReference type="SUPFAM" id="SSF51419">
    <property type="entry name" value="PLP-binding barrel"/>
    <property type="match status" value="1"/>
</dbReference>
<dbReference type="PROSITE" id="PS00878">
    <property type="entry name" value="ODR_DC_2_1"/>
    <property type="match status" value="1"/>
</dbReference>
<dbReference type="PROSITE" id="PS00879">
    <property type="entry name" value="ODR_DC_2_2"/>
    <property type="match status" value="1"/>
</dbReference>
<protein>
    <recommendedName>
        <fullName evidence="1">Biosynthetic arginine decarboxylase</fullName>
        <shortName evidence="1">ADC</shortName>
        <ecNumber evidence="1">4.1.1.19</ecNumber>
    </recommendedName>
</protein>
<proteinExistence type="inferred from homology"/>
<organism>
    <name type="scientific">Geotalea uraniireducens (strain Rf4)</name>
    <name type="common">Geobacter uraniireducens</name>
    <dbReference type="NCBI Taxonomy" id="351605"/>
    <lineage>
        <taxon>Bacteria</taxon>
        <taxon>Pseudomonadati</taxon>
        <taxon>Thermodesulfobacteriota</taxon>
        <taxon>Desulfuromonadia</taxon>
        <taxon>Geobacterales</taxon>
        <taxon>Geobacteraceae</taxon>
        <taxon>Geotalea</taxon>
    </lineage>
</organism>